<reference key="1">
    <citation type="journal article" date="1985" name="Nature">
        <title>Complete nucleotide sequence of the AIDS virus, HTLV-III.</title>
        <authorList>
            <person name="Ratner L."/>
            <person name="Haseltine W.A."/>
            <person name="Patarca R."/>
            <person name="Livak K.J."/>
            <person name="Starcich B.R."/>
            <person name="Josephs S.F."/>
            <person name="Doran E.R."/>
            <person name="Rafalski J.A."/>
            <person name="Whitehorn E.A."/>
            <person name="Baumeister K."/>
            <person name="Ivanoff L."/>
            <person name="Petteway S.R. Jr."/>
            <person name="Pearson M.L."/>
            <person name="Lautenberger J.A."/>
            <person name="Papas T.S."/>
            <person name="Ghrayeb J."/>
            <person name="Chang N.T."/>
            <person name="Gallo R.C."/>
            <person name="Wong-Staal F."/>
        </authorList>
    </citation>
    <scope>NUCLEOTIDE SEQUENCE [GENOMIC RNA]</scope>
</reference>
<accession>P05855</accession>
<sequence>MGGKWSKSSVVGWPAVRERMRRAEPAADGVGAVSRDLEKHGAITSSNTAATNADCAWLEAQEEEEVGFPVTPQVPLRPMTYKAAVDLSHFLKEKGGLEGLIHSQRRQDILDLWIHHTQGYFPDWQNYTPGPGVRYPLTFGWCYKLVPVEPEKEEANKGENTSLLHPVSLHGMDDPEREVLEWRFDSRLAFHHMARELHPEYFKNC</sequence>
<gene>
    <name evidence="1" type="primary">nef</name>
</gene>
<evidence type="ECO:0000255" key="1">
    <source>
        <dbReference type="HAMAP-Rule" id="MF_04078"/>
    </source>
</evidence>
<name>NEF_HV1B8</name>
<keyword id="KW-0014">AIDS</keyword>
<keyword id="KW-0053">Apoptosis</keyword>
<keyword id="KW-0244">Early protein</keyword>
<keyword id="KW-1032">Host cell membrane</keyword>
<keyword id="KW-1040">Host Golgi apparatus</keyword>
<keyword id="KW-1043">Host membrane</keyword>
<keyword id="KW-0945">Host-virus interaction</keyword>
<keyword id="KW-1080">Inhibition of host adaptive immune response by virus</keyword>
<keyword id="KW-1083">Inhibition of host autophagy by virus</keyword>
<keyword id="KW-1115">Inhibition of host MHC class I molecule presentation by virus</keyword>
<keyword id="KW-1116">Inhibition of host MHC class II molecule presentation by virus</keyword>
<keyword id="KW-0449">Lipoprotein</keyword>
<keyword id="KW-0472">Membrane</keyword>
<keyword id="KW-0519">Myristate</keyword>
<keyword id="KW-0597">Phosphoprotein</keyword>
<keyword id="KW-0964">Secreted</keyword>
<keyword id="KW-0729">SH3-binding</keyword>
<keyword id="KW-0899">Viral immunoevasion</keyword>
<keyword id="KW-0946">Virion</keyword>
<keyword id="KW-0843">Virulence</keyword>
<organismHost>
    <name type="scientific">Homo sapiens</name>
    <name type="common">Human</name>
    <dbReference type="NCBI Taxonomy" id="9606"/>
</organismHost>
<comment type="function">
    <text evidence="1">Factor of infectivity and pathogenicity, required for optimal virus replication. Alters numerous pathways of T-lymphocyte function and down-regulates immunity surface molecules in order to evade host defense and increase viral infectivity. Alters the functionality of other immunity cells, like dendritic cells, monocytes/macrophages and NK cells.</text>
</comment>
<comment type="function">
    <text evidence="1">In infected CD4(+) T-lymphocytes, down-regulates the surface MHC-I, mature MHC-II, CD4, CD28, CCR5 and CXCR4 molecules. Mediates internalization and degradation of host CD4 through the interaction of with the cytoplasmic tail of CD4, the recruitment of AP-2 (clathrin adapter protein complex 2), internalization through clathrin coated pits, and subsequent transport to endosomes and lysosomes for degradation. Diverts host MHC-I molecules to the trans-Golgi network-associated endosomal compartments by an endocytic pathway to finally target them for degradation. MHC-I down-regulation may involve AP-1 (clathrin adapter protein complex 1) or possibly Src family kinase-ZAP70/Syk-PI3K cascade recruited by PACS2. In consequence infected cells are masked for immune recognition by cytotoxic T-lymphocytes. Decreasing the number of immune receptors also prevents reinfection by more HIV particles (superinfection). Down-regulates host SERINC3 and SERINC5 thereby excluding these proteins from the viral particles. Virion infectivity is drastically higher when SERINC3 or SERINC5 are excluded from the viral envelope, because these host antiviral proteins impair the membrane fusion event necessary for subsequent virion penetration.</text>
</comment>
<comment type="function">
    <text evidence="1">Bypasses host T-cell signaling by inducing a transcriptional program nearly identical to that of anti-CD3 cell activation. Interaction with TCR-zeta chain up-regulates the Fas ligand (FasL). Increasing surface FasL molecules and decreasing surface MHC-I molecules on infected CD4(+) cells send attacking cytotoxic CD8+ T-lymphocytes into apoptosis.</text>
</comment>
<comment type="function">
    <text evidence="1">Plays a role in optimizing the host cell environment for viral replication without causing cell death by apoptosis. Protects the infected cells from apoptosis in order to keep them alive until the next virus generation is ready to strike. Inhibits the Fas and TNFR-mediated death signals by blocking MAP3K5/ASK1. Decreases the half-life of TP53, protecting the infected cell against p53-mediated apoptosis. Inhibits the apoptotic signals regulated by the Bcl-2 family proteins through the formation of a Nef/PI3-kinase/PAK2 complex that leads to activation of PAK2 and induces phosphorylation of host BAD.</text>
</comment>
<comment type="function">
    <text evidence="1">Extracellular Nef protein targets CD4(+) T-lymphocytes for apoptosis by interacting with CXCR4 surface receptors.</text>
</comment>
<comment type="subunit">
    <text evidence="1">Monomer; cytosolic form. Homodimer; membrane bound form. Interacts with Nef associated p21-activated kinase (PAK2); this interaction activates PAK2. Associates with the Nef-MHC-I-AP1 complex; this complex is required for MHC-I internalization. Interacts (via C-terminus) with host PI3-kinase. Interacts with host PACS1; this interaction seems to be weak. Interacts with host PACS2. Interacts with host LCK and MAPK3; these interactions inhibit the kinase activity of the latter. Interacts with host ATP6V1H; this interaction may play a role in CD4 endocytosis. Associates with the CD4-Nef-AP2 complex; this complex is required for CD4 internalization. Interacts with host AP2 subunit alpha and AP2 subunit sigma2. Interacts with TCR-zeta chain; this interaction up-regulates the Fas ligand (FasL) surface expression. Interacts with host HCK, LYN, and SRC; these interactions activate the Src family kinases. Interacts with MAP3K5; this interaction inhibits the Fas and TNFR-mediated death signals. Interacts with beta-COP and PTE1. Interacts with human RACK1; this increases Nef phosphorylation by PKC. Interacts with TP53; this interaction decreases the half-life of TP53, protecting the infected cell against p53-mediated apoptosis.</text>
</comment>
<comment type="subcellular location">
    <subcellularLocation>
        <location evidence="1">Host cell membrane</location>
        <topology evidence="1">Lipid-anchor</topology>
        <orientation evidence="1">Cytoplasmic side</orientation>
    </subcellularLocation>
    <subcellularLocation>
        <location evidence="1">Virion</location>
    </subcellularLocation>
    <subcellularLocation>
        <location evidence="1">Secreted</location>
    </subcellularLocation>
    <subcellularLocation>
        <location evidence="1">Host Golgi apparatus membrane</location>
    </subcellularLocation>
    <text evidence="1">TGN localization requires PACS1. Associates with the inner plasma membrane through its N-terminal domain. Nef stimulates its own export via the release of exosomes. Incorporated in virions at a rate of about 10 molecules per virion, where it is cleaved.</text>
</comment>
<comment type="induction">
    <text evidence="1">Expressed early in the viral replication cycle.</text>
</comment>
<comment type="domain">
    <text evidence="1">The N-terminal domain is composed of the N-myristoyl glycine and of a cluster of positively charged amino acids. It is required for inner plasma membrane targeting of Nef and virion incorporation, and thereby for infectivity. This domain is also involved in binding to TP53.</text>
</comment>
<comment type="domain">
    <text evidence="1">The SH3-binding domain constituted of PxxP motifs mediates binding to several Src family proteins thereby regulating their tyrosine kinase activity. The same motifs also mediates the association with MAPK3, PI3-kinase and TCR-zeta.</text>
</comment>
<comment type="domain">
    <text evidence="1">The dileucine internalization motif and a diacidic motif seem to be required for binding to AP-2.</text>
</comment>
<comment type="domain">
    <text evidence="1">The acidic region binds to the sorting protein PACS-2, which targets Nef to the paranuclear region, enabling the PxxP motif to direct assembly of an SFK/ZAP-70/PI3K complex that accelerates endocytosis of cell-surface MHC-I.</text>
</comment>
<comment type="PTM">
    <text evidence="1">The virion-associated Nef proteins are cleaved by the viral protease to release the soluble C-terminal core protein. Nef is probably cleaved concomitantly with viral structural proteins on maturation of virus particles.</text>
</comment>
<comment type="PTM">
    <text evidence="1">Myristoylated.</text>
</comment>
<comment type="PTM">
    <text evidence="1">Phosphorylated on serine residues, probably by host PKCdelta and theta.</text>
</comment>
<comment type="miscellaneous">
    <text evidence="1">HIV-1 lineages are divided in three main groups, M (for Major), O (for Outlier), and N (for New, or Non-M, Non-O). The vast majority of strains found worldwide belong to the group M. Group O seems to be endemic to and largely confined to Cameroon and neighboring countries in West Central Africa, where these viruses represent a small minority of HIV-1 strains. The group N is represented by a limited number of isolates from Cameroonian persons. The group M is further subdivided in 9 clades or subtypes (A to D, F to H, J and K).</text>
</comment>
<comment type="similarity">
    <text evidence="1">Belongs to the lentivirus primate group Nef protein family.</text>
</comment>
<dbReference type="EMBL" id="K02011">
    <property type="status" value="NOT_ANNOTATED_CDS"/>
    <property type="molecule type" value="Genomic_RNA"/>
</dbReference>
<dbReference type="SMR" id="P05855"/>
<dbReference type="ELM" id="P05855"/>
<dbReference type="GO" id="GO:0005576">
    <property type="term" value="C:extracellular region"/>
    <property type="evidence" value="ECO:0007669"/>
    <property type="project" value="UniProtKB-SubCell"/>
</dbReference>
<dbReference type="GO" id="GO:0044178">
    <property type="term" value="C:host cell Golgi membrane"/>
    <property type="evidence" value="ECO:0007669"/>
    <property type="project" value="UniProtKB-SubCell"/>
</dbReference>
<dbReference type="GO" id="GO:0020002">
    <property type="term" value="C:host cell plasma membrane"/>
    <property type="evidence" value="ECO:0007669"/>
    <property type="project" value="UniProtKB-SubCell"/>
</dbReference>
<dbReference type="GO" id="GO:0016020">
    <property type="term" value="C:membrane"/>
    <property type="evidence" value="ECO:0007669"/>
    <property type="project" value="UniProtKB-UniRule"/>
</dbReference>
<dbReference type="GO" id="GO:0044423">
    <property type="term" value="C:virion component"/>
    <property type="evidence" value="ECO:0007669"/>
    <property type="project" value="UniProtKB-UniRule"/>
</dbReference>
<dbReference type="GO" id="GO:0005525">
    <property type="term" value="F:GTP binding"/>
    <property type="evidence" value="ECO:0007669"/>
    <property type="project" value="UniProtKB-UniRule"/>
</dbReference>
<dbReference type="GO" id="GO:0017124">
    <property type="term" value="F:SH3 domain binding"/>
    <property type="evidence" value="ECO:0007669"/>
    <property type="project" value="UniProtKB-UniRule"/>
</dbReference>
<dbReference type="GO" id="GO:0046776">
    <property type="term" value="P:symbiont-mediated suppression of host antigen processing and presentation of peptide antigen via MHC class I"/>
    <property type="evidence" value="ECO:0007669"/>
    <property type="project" value="UniProtKB-UniRule"/>
</dbReference>
<dbReference type="GO" id="GO:0039505">
    <property type="term" value="P:symbiont-mediated suppression of host antigen processing and presentation of peptide antigen via MHC class II"/>
    <property type="evidence" value="ECO:0007669"/>
    <property type="project" value="UniProtKB-UniRule"/>
</dbReference>
<dbReference type="GO" id="GO:0140321">
    <property type="term" value="P:symbiont-mediated suppression of host autophagy"/>
    <property type="evidence" value="ECO:0007669"/>
    <property type="project" value="UniProtKB-KW"/>
</dbReference>
<dbReference type="FunFam" id="3.30.62.10:FF:000001">
    <property type="entry name" value="Protein Nef"/>
    <property type="match status" value="1"/>
</dbReference>
<dbReference type="FunFam" id="4.10.890.10:FF:000001">
    <property type="entry name" value="Protein Nef"/>
    <property type="match status" value="1"/>
</dbReference>
<dbReference type="Gene3D" id="4.10.890.10">
    <property type="entry name" value="HIV 1 nef anchor domain"/>
    <property type="match status" value="1"/>
</dbReference>
<dbReference type="Gene3D" id="3.30.62.10">
    <property type="entry name" value="Nef Regulatory Factor"/>
    <property type="match status" value="1"/>
</dbReference>
<dbReference type="HAMAP" id="MF_04078">
    <property type="entry name" value="NEF_HIV"/>
    <property type="match status" value="1"/>
</dbReference>
<dbReference type="InterPro" id="IPR027480">
    <property type="entry name" value="HIV-1_Nef_anchor_sf"/>
</dbReference>
<dbReference type="InterPro" id="IPR027481">
    <property type="entry name" value="HIV-1_Nef_core_sf"/>
</dbReference>
<dbReference type="InterPro" id="IPR001558">
    <property type="entry name" value="HIV_Nef"/>
</dbReference>
<dbReference type="Pfam" id="PF00469">
    <property type="entry name" value="F-protein"/>
    <property type="match status" value="1"/>
</dbReference>
<dbReference type="SUPFAM" id="SSF55671">
    <property type="entry name" value="Regulatory factor Nef"/>
    <property type="match status" value="1"/>
</dbReference>
<feature type="initiator methionine" description="Removed; by host" evidence="1">
    <location>
        <position position="1"/>
    </location>
</feature>
<feature type="chain" id="PRO_0000038331" description="Protein Nef" evidence="1">
    <location>
        <begin position="2"/>
        <end position="205"/>
    </location>
</feature>
<feature type="chain" id="PRO_0000038332" description="C-terminal core protein" evidence="1">
    <location>
        <begin position="58"/>
        <end position="205"/>
    </location>
</feature>
<feature type="region of interest" description="Acidic; interacts with host PACS1 and PACS2; stabilizes the interaction of NEF/MHC-I with host AP1M1; necessary for MHC-I internalization" evidence="1">
    <location>
        <begin position="62"/>
        <end position="65"/>
    </location>
</feature>
<feature type="region of interest" description="SH3-binding; interaction with Src family tyrosine kinases" evidence="1">
    <location>
        <begin position="69"/>
        <end position="78"/>
    </location>
</feature>
<feature type="region of interest" description="Mediates dimerization, Nef-PTE1 interaction" evidence="1">
    <location>
        <begin position="108"/>
        <end position="124"/>
    </location>
</feature>
<feature type="region of interest" description="Binding to ATP6V1H" evidence="1">
    <location>
        <begin position="148"/>
        <end position="179"/>
    </location>
</feature>
<feature type="short sequence motif" description="PxxP; stabilizes the interaction of NEF/MHC-I with host AP1M1; necessary for MHC-I internalization" evidence="1">
    <location>
        <begin position="72"/>
        <end position="75"/>
    </location>
</feature>
<feature type="short sequence motif" description="Dileucine internalization motif; necessary for CD4 internalization" evidence="1">
    <location>
        <begin position="163"/>
        <end position="164"/>
    </location>
</feature>
<feature type="short sequence motif" description="Diacidic; necessary for CD4 internalization" evidence="1">
    <location>
        <begin position="173"/>
        <end position="174"/>
    </location>
</feature>
<feature type="site" description="Might play a role in AP-1 recruitment to the Nef-MHC-I complex" evidence="1">
    <location>
        <position position="20"/>
    </location>
</feature>
<feature type="site" description="Cleavage; by viral protease" evidence="1">
    <location>
        <begin position="57"/>
        <end position="58"/>
    </location>
</feature>
<feature type="modified residue" description="Phosphoserine; by host" evidence="1">
    <location>
        <position position="6"/>
    </location>
</feature>
<feature type="lipid moiety-binding region" description="N-myristoyl glycine; by host" evidence="1">
    <location>
        <position position="2"/>
    </location>
</feature>
<organism>
    <name type="scientific">Human immunodeficiency virus type 1 group M subtype B (isolate BH8)</name>
    <name type="common">HIV-1</name>
    <dbReference type="NCBI Taxonomy" id="11684"/>
    <lineage>
        <taxon>Viruses</taxon>
        <taxon>Riboviria</taxon>
        <taxon>Pararnavirae</taxon>
        <taxon>Artverviricota</taxon>
        <taxon>Revtraviricetes</taxon>
        <taxon>Ortervirales</taxon>
        <taxon>Retroviridae</taxon>
        <taxon>Orthoretrovirinae</taxon>
        <taxon>Lentivirus</taxon>
        <taxon>Human immunodeficiency virus type 1</taxon>
    </lineage>
</organism>
<protein>
    <recommendedName>
        <fullName evidence="1">Protein Nef</fullName>
    </recommendedName>
    <alternativeName>
        <fullName evidence="1">3'ORF</fullName>
    </alternativeName>
    <alternativeName>
        <fullName evidence="1">Negative factor</fullName>
        <shortName evidence="1">F-protein</shortName>
    </alternativeName>
    <component>
        <recommendedName>
            <fullName evidence="1">C-terminal core protein</fullName>
        </recommendedName>
    </component>
</protein>
<proteinExistence type="inferred from homology"/>